<reference key="1">
    <citation type="journal article" date="2001" name="Nature">
        <title>Complete genome sequence of Salmonella enterica serovar Typhimurium LT2.</title>
        <authorList>
            <person name="McClelland M."/>
            <person name="Sanderson K.E."/>
            <person name="Spieth J."/>
            <person name="Clifton S.W."/>
            <person name="Latreille P."/>
            <person name="Courtney L."/>
            <person name="Porwollik S."/>
            <person name="Ali J."/>
            <person name="Dante M."/>
            <person name="Du F."/>
            <person name="Hou S."/>
            <person name="Layman D."/>
            <person name="Leonard S."/>
            <person name="Nguyen C."/>
            <person name="Scott K."/>
            <person name="Holmes A."/>
            <person name="Grewal N."/>
            <person name="Mulvaney E."/>
            <person name="Ryan E."/>
            <person name="Sun H."/>
            <person name="Florea L."/>
            <person name="Miller W."/>
            <person name="Stoneking T."/>
            <person name="Nhan M."/>
            <person name="Waterston R."/>
            <person name="Wilson R.K."/>
        </authorList>
    </citation>
    <scope>NUCLEOTIDE SEQUENCE [LARGE SCALE GENOMIC DNA]</scope>
    <source>
        <strain>LT2 / SGSC1412 / ATCC 700720</strain>
    </source>
</reference>
<sequence length="181" mass="19804">MMQPLYLVGPRGCGKTTIGMALAQATGFRFADTDRWLQSHVQMSVADIVEKEGWGGFRARETAALEAVSAPSTVVATGGGIILTEYNRRYMHRVGVVIYLCAPVSTLVNRLEAEPEADLRPTLTGKPLSEEVREVLEQRDALYRETAHYIIDATKAPAQVVSEIIAALPPSTQRLQGDVYT</sequence>
<comment type="function">
    <text evidence="1">Catalyzes the specific phosphorylation of the 3-hydroxyl group of shikimic acid using ATP as a cosubstrate.</text>
</comment>
<comment type="catalytic activity">
    <reaction evidence="1">
        <text>shikimate + ATP = 3-phosphoshikimate + ADP + H(+)</text>
        <dbReference type="Rhea" id="RHEA:13121"/>
        <dbReference type="ChEBI" id="CHEBI:15378"/>
        <dbReference type="ChEBI" id="CHEBI:30616"/>
        <dbReference type="ChEBI" id="CHEBI:36208"/>
        <dbReference type="ChEBI" id="CHEBI:145989"/>
        <dbReference type="ChEBI" id="CHEBI:456216"/>
        <dbReference type="EC" id="2.7.1.71"/>
    </reaction>
</comment>
<comment type="cofactor">
    <cofactor evidence="1">
        <name>Mg(2+)</name>
        <dbReference type="ChEBI" id="CHEBI:18420"/>
    </cofactor>
    <text evidence="1">Binds 1 Mg(2+) ion per subunit.</text>
</comment>
<comment type="pathway">
    <text evidence="1">Metabolic intermediate biosynthesis; chorismate biosynthesis; chorismate from D-erythrose 4-phosphate and phosphoenolpyruvate: step 5/7.</text>
</comment>
<comment type="subunit">
    <text evidence="1">Monomer.</text>
</comment>
<comment type="subcellular location">
    <subcellularLocation>
        <location evidence="1">Cytoplasm</location>
    </subcellularLocation>
</comment>
<comment type="domain">
    <text evidence="1">The LID domain closes over the active site upon ATP binding.</text>
</comment>
<comment type="similarity">
    <text evidence="1">Belongs to the shikimate kinase family. AroL subfamily.</text>
</comment>
<dbReference type="EC" id="2.7.1.71" evidence="1"/>
<dbReference type="EMBL" id="AE006468">
    <property type="protein sequence ID" value="AAL19342.1"/>
    <property type="molecule type" value="Genomic_DNA"/>
</dbReference>
<dbReference type="RefSeq" id="NP_459383.1">
    <property type="nucleotide sequence ID" value="NC_003197.2"/>
</dbReference>
<dbReference type="RefSeq" id="WP_000983569.1">
    <property type="nucleotide sequence ID" value="NC_003197.2"/>
</dbReference>
<dbReference type="SMR" id="P63603"/>
<dbReference type="STRING" id="99287.STM0388"/>
<dbReference type="PaxDb" id="99287-STM0388"/>
<dbReference type="GeneID" id="1251907"/>
<dbReference type="KEGG" id="stm:STM0388"/>
<dbReference type="PATRIC" id="fig|99287.12.peg.413"/>
<dbReference type="HOGENOM" id="CLU_057607_4_3_6"/>
<dbReference type="OMA" id="DTDIFMQ"/>
<dbReference type="PhylomeDB" id="P63603"/>
<dbReference type="BioCyc" id="SENT99287:STM0388-MONOMER"/>
<dbReference type="UniPathway" id="UPA00053">
    <property type="reaction ID" value="UER00088"/>
</dbReference>
<dbReference type="Proteomes" id="UP000001014">
    <property type="component" value="Chromosome"/>
</dbReference>
<dbReference type="GO" id="GO:0005829">
    <property type="term" value="C:cytosol"/>
    <property type="evidence" value="ECO:0000318"/>
    <property type="project" value="GO_Central"/>
</dbReference>
<dbReference type="GO" id="GO:0005524">
    <property type="term" value="F:ATP binding"/>
    <property type="evidence" value="ECO:0007669"/>
    <property type="project" value="UniProtKB-UniRule"/>
</dbReference>
<dbReference type="GO" id="GO:0000287">
    <property type="term" value="F:magnesium ion binding"/>
    <property type="evidence" value="ECO:0007669"/>
    <property type="project" value="UniProtKB-UniRule"/>
</dbReference>
<dbReference type="GO" id="GO:0004765">
    <property type="term" value="F:shikimate kinase activity"/>
    <property type="evidence" value="ECO:0000318"/>
    <property type="project" value="GO_Central"/>
</dbReference>
<dbReference type="GO" id="GO:0008652">
    <property type="term" value="P:amino acid biosynthetic process"/>
    <property type="evidence" value="ECO:0007669"/>
    <property type="project" value="UniProtKB-KW"/>
</dbReference>
<dbReference type="GO" id="GO:0009073">
    <property type="term" value="P:aromatic amino acid family biosynthetic process"/>
    <property type="evidence" value="ECO:0007669"/>
    <property type="project" value="UniProtKB-KW"/>
</dbReference>
<dbReference type="GO" id="GO:0009423">
    <property type="term" value="P:chorismate biosynthetic process"/>
    <property type="evidence" value="ECO:0007669"/>
    <property type="project" value="UniProtKB-UniRule"/>
</dbReference>
<dbReference type="CDD" id="cd00464">
    <property type="entry name" value="SK"/>
    <property type="match status" value="1"/>
</dbReference>
<dbReference type="FunFam" id="3.40.50.300:FF:000408">
    <property type="entry name" value="Shikimate kinase 2"/>
    <property type="match status" value="1"/>
</dbReference>
<dbReference type="Gene3D" id="3.40.50.300">
    <property type="entry name" value="P-loop containing nucleotide triphosphate hydrolases"/>
    <property type="match status" value="1"/>
</dbReference>
<dbReference type="HAMAP" id="MF_00109">
    <property type="entry name" value="Shikimate_kinase"/>
    <property type="match status" value="1"/>
</dbReference>
<dbReference type="HAMAP" id="MF_01269">
    <property type="entry name" value="Shikimate_kinase_2"/>
    <property type="match status" value="1"/>
</dbReference>
<dbReference type="InterPro" id="IPR027417">
    <property type="entry name" value="P-loop_NTPase"/>
</dbReference>
<dbReference type="InterPro" id="IPR031322">
    <property type="entry name" value="Shikimate/glucono_kinase"/>
</dbReference>
<dbReference type="InterPro" id="IPR000623">
    <property type="entry name" value="Shikimate_kinase/TSH1"/>
</dbReference>
<dbReference type="InterPro" id="IPR027544">
    <property type="entry name" value="Shikimate_kinase_2"/>
</dbReference>
<dbReference type="InterPro" id="IPR023000">
    <property type="entry name" value="Shikimate_kinase_CS"/>
</dbReference>
<dbReference type="NCBIfam" id="NF002988">
    <property type="entry name" value="PRK03731.1"/>
    <property type="match status" value="1"/>
</dbReference>
<dbReference type="PANTHER" id="PTHR21087">
    <property type="entry name" value="SHIKIMATE KINASE"/>
    <property type="match status" value="1"/>
</dbReference>
<dbReference type="PANTHER" id="PTHR21087:SF21">
    <property type="entry name" value="SHIKIMATE KINASE 2"/>
    <property type="match status" value="1"/>
</dbReference>
<dbReference type="Pfam" id="PF01202">
    <property type="entry name" value="SKI"/>
    <property type="match status" value="1"/>
</dbReference>
<dbReference type="PRINTS" id="PR01100">
    <property type="entry name" value="SHIKIMTKNASE"/>
</dbReference>
<dbReference type="SUPFAM" id="SSF52540">
    <property type="entry name" value="P-loop containing nucleoside triphosphate hydrolases"/>
    <property type="match status" value="1"/>
</dbReference>
<dbReference type="PROSITE" id="PS01128">
    <property type="entry name" value="SHIKIMATE_KINASE"/>
    <property type="match status" value="1"/>
</dbReference>
<evidence type="ECO:0000255" key="1">
    <source>
        <dbReference type="HAMAP-Rule" id="MF_01269"/>
    </source>
</evidence>
<protein>
    <recommendedName>
        <fullName evidence="1">Shikimate kinase 2</fullName>
        <shortName evidence="1">SK 2</shortName>
        <ecNumber evidence="1">2.7.1.71</ecNumber>
    </recommendedName>
</protein>
<keyword id="KW-0028">Amino-acid biosynthesis</keyword>
<keyword id="KW-0057">Aromatic amino acid biosynthesis</keyword>
<keyword id="KW-0067">ATP-binding</keyword>
<keyword id="KW-0963">Cytoplasm</keyword>
<keyword id="KW-0418">Kinase</keyword>
<keyword id="KW-0460">Magnesium</keyword>
<keyword id="KW-0479">Metal-binding</keyword>
<keyword id="KW-0547">Nucleotide-binding</keyword>
<keyword id="KW-1185">Reference proteome</keyword>
<keyword id="KW-0808">Transferase</keyword>
<gene>
    <name evidence="1" type="primary">aroL</name>
    <name type="ordered locus">STM0388</name>
</gene>
<accession>P63603</accession>
<accession>Q8XEP9</accession>
<proteinExistence type="inferred from homology"/>
<name>AROL_SALTY</name>
<feature type="chain" id="PRO_0000192407" description="Shikimate kinase 2">
    <location>
        <begin position="1"/>
        <end position="181"/>
    </location>
</feature>
<feature type="region of interest" description="LID domain">
    <location>
        <begin position="112"/>
        <end position="126"/>
    </location>
</feature>
<feature type="binding site" evidence="1">
    <location>
        <begin position="12"/>
        <end position="17"/>
    </location>
    <ligand>
        <name>ATP</name>
        <dbReference type="ChEBI" id="CHEBI:30616"/>
    </ligand>
</feature>
<feature type="binding site" evidence="1">
    <location>
        <position position="16"/>
    </location>
    <ligand>
        <name>Mg(2+)</name>
        <dbReference type="ChEBI" id="CHEBI:18420"/>
    </ligand>
</feature>
<feature type="binding site" evidence="1">
    <location>
        <position position="32"/>
    </location>
    <ligand>
        <name>Mg(2+)</name>
        <dbReference type="ChEBI" id="CHEBI:18420"/>
    </ligand>
</feature>
<feature type="binding site" evidence="1">
    <location>
        <position position="34"/>
    </location>
    <ligand>
        <name>substrate</name>
    </ligand>
</feature>
<feature type="binding site" evidence="1">
    <location>
        <position position="58"/>
    </location>
    <ligand>
        <name>substrate</name>
    </ligand>
</feature>
<feature type="binding site" evidence="1">
    <location>
        <position position="79"/>
    </location>
    <ligand>
        <name>substrate</name>
    </ligand>
</feature>
<feature type="binding site" evidence="1">
    <location>
        <position position="120"/>
    </location>
    <ligand>
        <name>ATP</name>
        <dbReference type="ChEBI" id="CHEBI:30616"/>
    </ligand>
</feature>
<feature type="binding site" evidence="1">
    <location>
        <position position="139"/>
    </location>
    <ligand>
        <name>substrate</name>
    </ligand>
</feature>
<organism>
    <name type="scientific">Salmonella typhimurium (strain LT2 / SGSC1412 / ATCC 700720)</name>
    <dbReference type="NCBI Taxonomy" id="99287"/>
    <lineage>
        <taxon>Bacteria</taxon>
        <taxon>Pseudomonadati</taxon>
        <taxon>Pseudomonadota</taxon>
        <taxon>Gammaproteobacteria</taxon>
        <taxon>Enterobacterales</taxon>
        <taxon>Enterobacteriaceae</taxon>
        <taxon>Salmonella</taxon>
    </lineage>
</organism>